<comment type="function">
    <text evidence="1">This protein binds to the 23S rRNA, and is important in its secondary structure. It is located near the subunit interface in the base of the L7/L12 stalk, and near the tRNA binding site of the peptidyltransferase center.</text>
</comment>
<comment type="subunit">
    <text evidence="1">Part of the 50S ribosomal subunit.</text>
</comment>
<comment type="similarity">
    <text evidence="1">Belongs to the universal ribosomal protein uL6 family.</text>
</comment>
<protein>
    <recommendedName>
        <fullName evidence="1">Large ribosomal subunit protein uL6</fullName>
    </recommendedName>
    <alternativeName>
        <fullName evidence="3">50S ribosomal protein L6</fullName>
    </alternativeName>
</protein>
<reference key="1">
    <citation type="submission" date="2007-10" db="EMBL/GenBank/DDBJ databases">
        <title>Complete sequence of Shewanella pealeana ATCC 700345.</title>
        <authorList>
            <consortium name="US DOE Joint Genome Institute"/>
            <person name="Copeland A."/>
            <person name="Lucas S."/>
            <person name="Lapidus A."/>
            <person name="Barry K."/>
            <person name="Glavina del Rio T."/>
            <person name="Dalin E."/>
            <person name="Tice H."/>
            <person name="Pitluck S."/>
            <person name="Chertkov O."/>
            <person name="Brettin T."/>
            <person name="Bruce D."/>
            <person name="Detter J.C."/>
            <person name="Han C."/>
            <person name="Schmutz J."/>
            <person name="Larimer F."/>
            <person name="Land M."/>
            <person name="Hauser L."/>
            <person name="Kyrpides N."/>
            <person name="Kim E."/>
            <person name="Zhao J.-S.Z."/>
            <person name="Manno D."/>
            <person name="Hawari J."/>
            <person name="Richardson P."/>
        </authorList>
    </citation>
    <scope>NUCLEOTIDE SEQUENCE [LARGE SCALE GENOMIC DNA]</scope>
    <source>
        <strain>ATCC 700345 / ANG-SQ1</strain>
    </source>
</reference>
<proteinExistence type="inferred from homology"/>
<evidence type="ECO:0000255" key="1">
    <source>
        <dbReference type="HAMAP-Rule" id="MF_01365"/>
    </source>
</evidence>
<evidence type="ECO:0000256" key="2">
    <source>
        <dbReference type="SAM" id="MobiDB-lite"/>
    </source>
</evidence>
<evidence type="ECO:0000305" key="3"/>
<accession>A8GYZ1</accession>
<sequence length="176" mass="18750">MSRVAKAPVAIPAGVEVTLNEQTITVKGTKGSLTRVINSDVSVVVEDNEIKCSPVESAKTAAQAGTARALINNMVVGVTDGFVKKLQLVGVGYRAKLAGKDIDLTLGFSHPLVHKLPDGVTAECPSQTEIVLSGTDKQLIGQVAAEIRGYRPPEPYKGKGVRYADEQVRRKEAKKK</sequence>
<feature type="chain" id="PRO_1000087066" description="Large ribosomal subunit protein uL6">
    <location>
        <begin position="1"/>
        <end position="176"/>
    </location>
</feature>
<feature type="region of interest" description="Disordered" evidence="2">
    <location>
        <begin position="151"/>
        <end position="176"/>
    </location>
</feature>
<feature type="compositionally biased region" description="Basic and acidic residues" evidence="2">
    <location>
        <begin position="151"/>
        <end position="170"/>
    </location>
</feature>
<dbReference type="EMBL" id="CP000851">
    <property type="protein sequence ID" value="ABV85528.1"/>
    <property type="molecule type" value="Genomic_DNA"/>
</dbReference>
<dbReference type="RefSeq" id="WP_012153469.1">
    <property type="nucleotide sequence ID" value="NC_009901.1"/>
</dbReference>
<dbReference type="SMR" id="A8GYZ1"/>
<dbReference type="STRING" id="398579.Spea_0199"/>
<dbReference type="KEGG" id="spl:Spea_0199"/>
<dbReference type="eggNOG" id="COG0097">
    <property type="taxonomic scope" value="Bacteria"/>
</dbReference>
<dbReference type="HOGENOM" id="CLU_065464_1_2_6"/>
<dbReference type="OrthoDB" id="9805007at2"/>
<dbReference type="Proteomes" id="UP000002608">
    <property type="component" value="Chromosome"/>
</dbReference>
<dbReference type="GO" id="GO:0022625">
    <property type="term" value="C:cytosolic large ribosomal subunit"/>
    <property type="evidence" value="ECO:0007669"/>
    <property type="project" value="TreeGrafter"/>
</dbReference>
<dbReference type="GO" id="GO:0019843">
    <property type="term" value="F:rRNA binding"/>
    <property type="evidence" value="ECO:0007669"/>
    <property type="project" value="UniProtKB-UniRule"/>
</dbReference>
<dbReference type="GO" id="GO:0003735">
    <property type="term" value="F:structural constituent of ribosome"/>
    <property type="evidence" value="ECO:0007669"/>
    <property type="project" value="InterPro"/>
</dbReference>
<dbReference type="GO" id="GO:0002181">
    <property type="term" value="P:cytoplasmic translation"/>
    <property type="evidence" value="ECO:0007669"/>
    <property type="project" value="TreeGrafter"/>
</dbReference>
<dbReference type="FunFam" id="3.90.930.12:FF:000001">
    <property type="entry name" value="50S ribosomal protein L6"/>
    <property type="match status" value="1"/>
</dbReference>
<dbReference type="FunFam" id="3.90.930.12:FF:000002">
    <property type="entry name" value="50S ribosomal protein L6"/>
    <property type="match status" value="1"/>
</dbReference>
<dbReference type="Gene3D" id="3.90.930.12">
    <property type="entry name" value="Ribosomal protein L6, alpha-beta domain"/>
    <property type="match status" value="2"/>
</dbReference>
<dbReference type="HAMAP" id="MF_01365_B">
    <property type="entry name" value="Ribosomal_uL6_B"/>
    <property type="match status" value="1"/>
</dbReference>
<dbReference type="InterPro" id="IPR000702">
    <property type="entry name" value="Ribosomal_uL6-like"/>
</dbReference>
<dbReference type="InterPro" id="IPR036789">
    <property type="entry name" value="Ribosomal_uL6-like_a/b-dom_sf"/>
</dbReference>
<dbReference type="InterPro" id="IPR020040">
    <property type="entry name" value="Ribosomal_uL6_a/b-dom"/>
</dbReference>
<dbReference type="InterPro" id="IPR019906">
    <property type="entry name" value="Ribosomal_uL6_bac-type"/>
</dbReference>
<dbReference type="InterPro" id="IPR002358">
    <property type="entry name" value="Ribosomal_uL6_CS"/>
</dbReference>
<dbReference type="NCBIfam" id="TIGR03654">
    <property type="entry name" value="L6_bact"/>
    <property type="match status" value="1"/>
</dbReference>
<dbReference type="PANTHER" id="PTHR11655">
    <property type="entry name" value="60S/50S RIBOSOMAL PROTEIN L6/L9"/>
    <property type="match status" value="1"/>
</dbReference>
<dbReference type="PANTHER" id="PTHR11655:SF14">
    <property type="entry name" value="LARGE RIBOSOMAL SUBUNIT PROTEIN UL6M"/>
    <property type="match status" value="1"/>
</dbReference>
<dbReference type="Pfam" id="PF00347">
    <property type="entry name" value="Ribosomal_L6"/>
    <property type="match status" value="2"/>
</dbReference>
<dbReference type="PIRSF" id="PIRSF002162">
    <property type="entry name" value="Ribosomal_L6"/>
    <property type="match status" value="1"/>
</dbReference>
<dbReference type="PRINTS" id="PR00059">
    <property type="entry name" value="RIBOSOMALL6"/>
</dbReference>
<dbReference type="SUPFAM" id="SSF56053">
    <property type="entry name" value="Ribosomal protein L6"/>
    <property type="match status" value="2"/>
</dbReference>
<dbReference type="PROSITE" id="PS00525">
    <property type="entry name" value="RIBOSOMAL_L6_1"/>
    <property type="match status" value="1"/>
</dbReference>
<gene>
    <name evidence="1" type="primary">rplF</name>
    <name type="ordered locus">Spea_0199</name>
</gene>
<keyword id="KW-1185">Reference proteome</keyword>
<keyword id="KW-0687">Ribonucleoprotein</keyword>
<keyword id="KW-0689">Ribosomal protein</keyword>
<keyword id="KW-0694">RNA-binding</keyword>
<keyword id="KW-0699">rRNA-binding</keyword>
<name>RL6_SHEPA</name>
<organism>
    <name type="scientific">Shewanella pealeana (strain ATCC 700345 / ANG-SQ1)</name>
    <dbReference type="NCBI Taxonomy" id="398579"/>
    <lineage>
        <taxon>Bacteria</taxon>
        <taxon>Pseudomonadati</taxon>
        <taxon>Pseudomonadota</taxon>
        <taxon>Gammaproteobacteria</taxon>
        <taxon>Alteromonadales</taxon>
        <taxon>Shewanellaceae</taxon>
        <taxon>Shewanella</taxon>
    </lineage>
</organism>